<reference key="1">
    <citation type="journal article" date="2010" name="J. Bacteriol.">
        <title>Genome sequence of the deep-rooted Yersinia pestis strain Angola reveals new insights into the evolution and pangenome of the plague bacterium.</title>
        <authorList>
            <person name="Eppinger M."/>
            <person name="Worsham P.L."/>
            <person name="Nikolich M.P."/>
            <person name="Riley D.R."/>
            <person name="Sebastian Y."/>
            <person name="Mou S."/>
            <person name="Achtman M."/>
            <person name="Lindler L.E."/>
            <person name="Ravel J."/>
        </authorList>
    </citation>
    <scope>NUCLEOTIDE SEQUENCE [LARGE SCALE GENOMIC DNA]</scope>
    <source>
        <strain>Angola</strain>
    </source>
</reference>
<organism>
    <name type="scientific">Yersinia pestis bv. Antiqua (strain Angola)</name>
    <dbReference type="NCBI Taxonomy" id="349746"/>
    <lineage>
        <taxon>Bacteria</taxon>
        <taxon>Pseudomonadati</taxon>
        <taxon>Pseudomonadota</taxon>
        <taxon>Gammaproteobacteria</taxon>
        <taxon>Enterobacterales</taxon>
        <taxon>Yersiniaceae</taxon>
        <taxon>Yersinia</taxon>
    </lineage>
</organism>
<accession>A9R664</accession>
<sequence length="91" mass="10164">MARVTVQDAVEKIGNRFDLVLVAARRARQIQSGGKDALVPEENDKVTVIALREIEEGLITNQILDVRERQEQQEQQAAEIQAVTAIAEGRR</sequence>
<keyword id="KW-0240">DNA-directed RNA polymerase</keyword>
<keyword id="KW-0548">Nucleotidyltransferase</keyword>
<keyword id="KW-0804">Transcription</keyword>
<keyword id="KW-0808">Transferase</keyword>
<gene>
    <name evidence="1" type="primary">rpoZ</name>
    <name type="ordered locus">YpAngola_A0044</name>
</gene>
<evidence type="ECO:0000255" key="1">
    <source>
        <dbReference type="HAMAP-Rule" id="MF_00366"/>
    </source>
</evidence>
<protein>
    <recommendedName>
        <fullName evidence="1">DNA-directed RNA polymerase subunit omega</fullName>
        <shortName evidence="1">RNAP omega subunit</shortName>
        <ecNumber evidence="1">2.7.7.6</ecNumber>
    </recommendedName>
    <alternativeName>
        <fullName evidence="1">RNA polymerase omega subunit</fullName>
    </alternativeName>
    <alternativeName>
        <fullName evidence="1">Transcriptase subunit omega</fullName>
    </alternativeName>
</protein>
<dbReference type="EC" id="2.7.7.6" evidence="1"/>
<dbReference type="EMBL" id="CP000901">
    <property type="protein sequence ID" value="ABX88463.1"/>
    <property type="molecule type" value="Genomic_DNA"/>
</dbReference>
<dbReference type="RefSeq" id="WP_002209001.1">
    <property type="nucleotide sequence ID" value="NZ_CP009935.1"/>
</dbReference>
<dbReference type="SMR" id="A9R664"/>
<dbReference type="GeneID" id="57974551"/>
<dbReference type="KEGG" id="ypg:YpAngola_A0044"/>
<dbReference type="PATRIC" id="fig|349746.12.peg.987"/>
<dbReference type="GO" id="GO:0000428">
    <property type="term" value="C:DNA-directed RNA polymerase complex"/>
    <property type="evidence" value="ECO:0007669"/>
    <property type="project" value="UniProtKB-KW"/>
</dbReference>
<dbReference type="GO" id="GO:0003677">
    <property type="term" value="F:DNA binding"/>
    <property type="evidence" value="ECO:0007669"/>
    <property type="project" value="UniProtKB-UniRule"/>
</dbReference>
<dbReference type="GO" id="GO:0003899">
    <property type="term" value="F:DNA-directed RNA polymerase activity"/>
    <property type="evidence" value="ECO:0007669"/>
    <property type="project" value="UniProtKB-UniRule"/>
</dbReference>
<dbReference type="GO" id="GO:0006351">
    <property type="term" value="P:DNA-templated transcription"/>
    <property type="evidence" value="ECO:0007669"/>
    <property type="project" value="UniProtKB-UniRule"/>
</dbReference>
<dbReference type="FunFam" id="3.90.940.10:FF:000001">
    <property type="entry name" value="DNA-directed RNA polymerase subunit omega"/>
    <property type="match status" value="1"/>
</dbReference>
<dbReference type="Gene3D" id="3.90.940.10">
    <property type="match status" value="1"/>
</dbReference>
<dbReference type="HAMAP" id="MF_00366">
    <property type="entry name" value="RNApol_bact_RpoZ"/>
    <property type="match status" value="1"/>
</dbReference>
<dbReference type="InterPro" id="IPR003716">
    <property type="entry name" value="DNA-dir_RNA_pol_omega"/>
</dbReference>
<dbReference type="InterPro" id="IPR006110">
    <property type="entry name" value="Pol_omega/Rpo6/RPB6"/>
</dbReference>
<dbReference type="InterPro" id="IPR036161">
    <property type="entry name" value="RPB6/omega-like_sf"/>
</dbReference>
<dbReference type="NCBIfam" id="TIGR00690">
    <property type="entry name" value="rpoZ"/>
    <property type="match status" value="1"/>
</dbReference>
<dbReference type="PANTHER" id="PTHR34476">
    <property type="entry name" value="DNA-DIRECTED RNA POLYMERASE SUBUNIT OMEGA"/>
    <property type="match status" value="1"/>
</dbReference>
<dbReference type="PANTHER" id="PTHR34476:SF1">
    <property type="entry name" value="DNA-DIRECTED RNA POLYMERASE SUBUNIT OMEGA"/>
    <property type="match status" value="1"/>
</dbReference>
<dbReference type="Pfam" id="PF01192">
    <property type="entry name" value="RNA_pol_Rpb6"/>
    <property type="match status" value="1"/>
</dbReference>
<dbReference type="SMART" id="SM01409">
    <property type="entry name" value="RNA_pol_Rpb6"/>
    <property type="match status" value="1"/>
</dbReference>
<dbReference type="SUPFAM" id="SSF63562">
    <property type="entry name" value="RPB6/omega subunit-like"/>
    <property type="match status" value="1"/>
</dbReference>
<name>RPOZ_YERPG</name>
<feature type="chain" id="PRO_1000121294" description="DNA-directed RNA polymerase subunit omega">
    <location>
        <begin position="1"/>
        <end position="91"/>
    </location>
</feature>
<proteinExistence type="inferred from homology"/>
<comment type="function">
    <text evidence="1">Promotes RNA polymerase assembly. Latches the N- and C-terminal regions of the beta' subunit thereby facilitating its interaction with the beta and alpha subunits.</text>
</comment>
<comment type="catalytic activity">
    <reaction evidence="1">
        <text>RNA(n) + a ribonucleoside 5'-triphosphate = RNA(n+1) + diphosphate</text>
        <dbReference type="Rhea" id="RHEA:21248"/>
        <dbReference type="Rhea" id="RHEA-COMP:14527"/>
        <dbReference type="Rhea" id="RHEA-COMP:17342"/>
        <dbReference type="ChEBI" id="CHEBI:33019"/>
        <dbReference type="ChEBI" id="CHEBI:61557"/>
        <dbReference type="ChEBI" id="CHEBI:140395"/>
        <dbReference type="EC" id="2.7.7.6"/>
    </reaction>
</comment>
<comment type="subunit">
    <text evidence="1">The RNAP catalytic core consists of 2 alpha, 1 beta, 1 beta' and 1 omega subunit. When a sigma factor is associated with the core the holoenzyme is formed, which can initiate transcription.</text>
</comment>
<comment type="similarity">
    <text evidence="1">Belongs to the RNA polymerase subunit omega family.</text>
</comment>